<feature type="chain" id="PRO_0000374920" description="Ribosomal protein uS12 methylthiotransferase RimO">
    <location>
        <begin position="1"/>
        <end position="469"/>
    </location>
</feature>
<feature type="domain" description="MTTase N-terminal" evidence="1">
    <location>
        <begin position="17"/>
        <end position="132"/>
    </location>
</feature>
<feature type="domain" description="Radical SAM core" evidence="2">
    <location>
        <begin position="153"/>
        <end position="395"/>
    </location>
</feature>
<feature type="domain" description="TRAM" evidence="1">
    <location>
        <begin position="397"/>
        <end position="469"/>
    </location>
</feature>
<feature type="binding site" evidence="1">
    <location>
        <position position="26"/>
    </location>
    <ligand>
        <name>[4Fe-4S] cluster</name>
        <dbReference type="ChEBI" id="CHEBI:49883"/>
        <label>1</label>
    </ligand>
</feature>
<feature type="binding site" evidence="1">
    <location>
        <position position="62"/>
    </location>
    <ligand>
        <name>[4Fe-4S] cluster</name>
        <dbReference type="ChEBI" id="CHEBI:49883"/>
        <label>1</label>
    </ligand>
</feature>
<feature type="binding site" evidence="1">
    <location>
        <position position="91"/>
    </location>
    <ligand>
        <name>[4Fe-4S] cluster</name>
        <dbReference type="ChEBI" id="CHEBI:49883"/>
        <label>1</label>
    </ligand>
</feature>
<feature type="binding site" evidence="1">
    <location>
        <position position="167"/>
    </location>
    <ligand>
        <name>[4Fe-4S] cluster</name>
        <dbReference type="ChEBI" id="CHEBI:49883"/>
        <label>2</label>
        <note>4Fe-4S-S-AdoMet</note>
    </ligand>
</feature>
<feature type="binding site" evidence="1">
    <location>
        <position position="171"/>
    </location>
    <ligand>
        <name>[4Fe-4S] cluster</name>
        <dbReference type="ChEBI" id="CHEBI:49883"/>
        <label>2</label>
        <note>4Fe-4S-S-AdoMet</note>
    </ligand>
</feature>
<feature type="binding site" evidence="1">
    <location>
        <position position="174"/>
    </location>
    <ligand>
        <name>[4Fe-4S] cluster</name>
        <dbReference type="ChEBI" id="CHEBI:49883"/>
        <label>2</label>
        <note>4Fe-4S-S-AdoMet</note>
    </ligand>
</feature>
<proteinExistence type="inferred from homology"/>
<keyword id="KW-0004">4Fe-4S</keyword>
<keyword id="KW-0963">Cytoplasm</keyword>
<keyword id="KW-0408">Iron</keyword>
<keyword id="KW-0411">Iron-sulfur</keyword>
<keyword id="KW-0479">Metal-binding</keyword>
<keyword id="KW-1185">Reference proteome</keyword>
<keyword id="KW-0949">S-adenosyl-L-methionine</keyword>
<keyword id="KW-0808">Transferase</keyword>
<name>RIMO_POLSJ</name>
<accession>Q12A25</accession>
<organism>
    <name type="scientific">Polaromonas sp. (strain JS666 / ATCC BAA-500)</name>
    <dbReference type="NCBI Taxonomy" id="296591"/>
    <lineage>
        <taxon>Bacteria</taxon>
        <taxon>Pseudomonadati</taxon>
        <taxon>Pseudomonadota</taxon>
        <taxon>Betaproteobacteria</taxon>
        <taxon>Burkholderiales</taxon>
        <taxon>Comamonadaceae</taxon>
        <taxon>Polaromonas</taxon>
    </lineage>
</organism>
<dbReference type="EC" id="2.8.4.4" evidence="1"/>
<dbReference type="EMBL" id="CP000316">
    <property type="protein sequence ID" value="ABE44617.1"/>
    <property type="molecule type" value="Genomic_DNA"/>
</dbReference>
<dbReference type="RefSeq" id="WP_011483615.1">
    <property type="nucleotide sequence ID" value="NC_007948.1"/>
</dbReference>
<dbReference type="SMR" id="Q12A25"/>
<dbReference type="STRING" id="296591.Bpro_2701"/>
<dbReference type="KEGG" id="pol:Bpro_2701"/>
<dbReference type="eggNOG" id="COG0621">
    <property type="taxonomic scope" value="Bacteria"/>
</dbReference>
<dbReference type="HOGENOM" id="CLU_018697_0_0_4"/>
<dbReference type="OrthoDB" id="9805215at2"/>
<dbReference type="Proteomes" id="UP000001983">
    <property type="component" value="Chromosome"/>
</dbReference>
<dbReference type="GO" id="GO:0005829">
    <property type="term" value="C:cytosol"/>
    <property type="evidence" value="ECO:0007669"/>
    <property type="project" value="TreeGrafter"/>
</dbReference>
<dbReference type="GO" id="GO:0051539">
    <property type="term" value="F:4 iron, 4 sulfur cluster binding"/>
    <property type="evidence" value="ECO:0007669"/>
    <property type="project" value="UniProtKB-UniRule"/>
</dbReference>
<dbReference type="GO" id="GO:0035599">
    <property type="term" value="F:aspartic acid methylthiotransferase activity"/>
    <property type="evidence" value="ECO:0007669"/>
    <property type="project" value="TreeGrafter"/>
</dbReference>
<dbReference type="GO" id="GO:0046872">
    <property type="term" value="F:metal ion binding"/>
    <property type="evidence" value="ECO:0007669"/>
    <property type="project" value="UniProtKB-KW"/>
</dbReference>
<dbReference type="GO" id="GO:0103039">
    <property type="term" value="F:protein methylthiotransferase activity"/>
    <property type="evidence" value="ECO:0007669"/>
    <property type="project" value="UniProtKB-EC"/>
</dbReference>
<dbReference type="GO" id="GO:0006400">
    <property type="term" value="P:tRNA modification"/>
    <property type="evidence" value="ECO:0007669"/>
    <property type="project" value="InterPro"/>
</dbReference>
<dbReference type="CDD" id="cd01335">
    <property type="entry name" value="Radical_SAM"/>
    <property type="match status" value="1"/>
</dbReference>
<dbReference type="FunFam" id="3.40.50.12160:FF:000002">
    <property type="entry name" value="Ribosomal protein S12 methylthiotransferase RimO"/>
    <property type="match status" value="1"/>
</dbReference>
<dbReference type="FunFam" id="3.80.30.20:FF:000001">
    <property type="entry name" value="tRNA-2-methylthio-N(6)-dimethylallyladenosine synthase 2"/>
    <property type="match status" value="1"/>
</dbReference>
<dbReference type="Gene3D" id="3.40.50.12160">
    <property type="entry name" value="Methylthiotransferase, N-terminal domain"/>
    <property type="match status" value="1"/>
</dbReference>
<dbReference type="Gene3D" id="2.40.50.140">
    <property type="entry name" value="Nucleic acid-binding proteins"/>
    <property type="match status" value="1"/>
</dbReference>
<dbReference type="Gene3D" id="3.80.30.20">
    <property type="entry name" value="tm_1862 like domain"/>
    <property type="match status" value="1"/>
</dbReference>
<dbReference type="HAMAP" id="MF_01865">
    <property type="entry name" value="MTTase_RimO"/>
    <property type="match status" value="1"/>
</dbReference>
<dbReference type="InterPro" id="IPR006638">
    <property type="entry name" value="Elp3/MiaA/NifB-like_rSAM"/>
</dbReference>
<dbReference type="InterPro" id="IPR005839">
    <property type="entry name" value="Methylthiotransferase"/>
</dbReference>
<dbReference type="InterPro" id="IPR020612">
    <property type="entry name" value="Methylthiotransferase_CS"/>
</dbReference>
<dbReference type="InterPro" id="IPR013848">
    <property type="entry name" value="Methylthiotransferase_N"/>
</dbReference>
<dbReference type="InterPro" id="IPR038135">
    <property type="entry name" value="Methylthiotransferase_N_sf"/>
</dbReference>
<dbReference type="InterPro" id="IPR012340">
    <property type="entry name" value="NA-bd_OB-fold"/>
</dbReference>
<dbReference type="InterPro" id="IPR005840">
    <property type="entry name" value="Ribosomal_uS12_MeSTrfase_RimO"/>
</dbReference>
<dbReference type="InterPro" id="IPR007197">
    <property type="entry name" value="rSAM"/>
</dbReference>
<dbReference type="InterPro" id="IPR023404">
    <property type="entry name" value="rSAM_horseshoe"/>
</dbReference>
<dbReference type="InterPro" id="IPR002792">
    <property type="entry name" value="TRAM_dom"/>
</dbReference>
<dbReference type="NCBIfam" id="TIGR01125">
    <property type="entry name" value="30S ribosomal protein S12 methylthiotransferase RimO"/>
    <property type="match status" value="1"/>
</dbReference>
<dbReference type="NCBIfam" id="TIGR00089">
    <property type="entry name" value="MiaB/RimO family radical SAM methylthiotransferase"/>
    <property type="match status" value="1"/>
</dbReference>
<dbReference type="PANTHER" id="PTHR43837">
    <property type="entry name" value="RIBOSOMAL PROTEIN S12 METHYLTHIOTRANSFERASE RIMO"/>
    <property type="match status" value="1"/>
</dbReference>
<dbReference type="PANTHER" id="PTHR43837:SF1">
    <property type="entry name" value="RIBOSOMAL PROTEIN US12 METHYLTHIOTRANSFERASE RIMO"/>
    <property type="match status" value="1"/>
</dbReference>
<dbReference type="Pfam" id="PF04055">
    <property type="entry name" value="Radical_SAM"/>
    <property type="match status" value="1"/>
</dbReference>
<dbReference type="Pfam" id="PF18693">
    <property type="entry name" value="TRAM_2"/>
    <property type="match status" value="1"/>
</dbReference>
<dbReference type="Pfam" id="PF00919">
    <property type="entry name" value="UPF0004"/>
    <property type="match status" value="1"/>
</dbReference>
<dbReference type="SFLD" id="SFLDG01082">
    <property type="entry name" value="B12-binding_domain_containing"/>
    <property type="match status" value="1"/>
</dbReference>
<dbReference type="SFLD" id="SFLDG01061">
    <property type="entry name" value="methylthiotransferase"/>
    <property type="match status" value="1"/>
</dbReference>
<dbReference type="SFLD" id="SFLDF00274">
    <property type="entry name" value="ribosomal_protein_S12_methylth"/>
    <property type="match status" value="1"/>
</dbReference>
<dbReference type="SMART" id="SM00729">
    <property type="entry name" value="Elp3"/>
    <property type="match status" value="1"/>
</dbReference>
<dbReference type="SUPFAM" id="SSF102114">
    <property type="entry name" value="Radical SAM enzymes"/>
    <property type="match status" value="1"/>
</dbReference>
<dbReference type="PROSITE" id="PS51449">
    <property type="entry name" value="MTTASE_N"/>
    <property type="match status" value="1"/>
</dbReference>
<dbReference type="PROSITE" id="PS01278">
    <property type="entry name" value="MTTASE_RADICAL"/>
    <property type="match status" value="1"/>
</dbReference>
<dbReference type="PROSITE" id="PS51918">
    <property type="entry name" value="RADICAL_SAM"/>
    <property type="match status" value="1"/>
</dbReference>
<sequence>MSEVLSPMTAISTKPAPRVGFVSLGCPKALTDSELILTQLSAEGYQTSKTFEGADLVIVNTCGFIDDAVKESLDTIGEALAENGRVIVTGCLGAKGGEGAGNLVRQMHPSVLAVTGPHATQEVMDAVHLNLPKPHDPFVDLVPNAFGIAGIKLTPKHYAYLKISEGCNHRCTFCIIPSMRGDLVSRPIGDVLNEARALFEGGVKELLVISQDTSAYGVDVKYRTGFWDGKPVKTRMLELVQALGDIAEPYGAWVRLHYVYPYPSVDEVLPLMATGKVLPYLDVPLQHSHPDVLKRMKRPASGEKNLERIARWREICPEIVIRSTFIAGFPGETEAEFAHLLEFMREARIDRAGCFAYSAVEGATANDIPGMLPLEVREERRARFMAVAEEVSSLKLQQRVGATMQVLVDSAPALGRKGGTGRSYADAPEIDGVVKLLPPEKISKTLKVGEFTRARIVGTQGHDLVAIPV</sequence>
<evidence type="ECO:0000255" key="1">
    <source>
        <dbReference type="HAMAP-Rule" id="MF_01865"/>
    </source>
</evidence>
<evidence type="ECO:0000255" key="2">
    <source>
        <dbReference type="PROSITE-ProRule" id="PRU01266"/>
    </source>
</evidence>
<reference key="1">
    <citation type="journal article" date="2008" name="Appl. Environ. Microbiol.">
        <title>The genome of Polaromonas sp. strain JS666: insights into the evolution of a hydrocarbon- and xenobiotic-degrading bacterium, and features of relevance to biotechnology.</title>
        <authorList>
            <person name="Mattes T.E."/>
            <person name="Alexander A.K."/>
            <person name="Richardson P.M."/>
            <person name="Munk A.C."/>
            <person name="Han C.S."/>
            <person name="Stothard P."/>
            <person name="Coleman N.V."/>
        </authorList>
    </citation>
    <scope>NUCLEOTIDE SEQUENCE [LARGE SCALE GENOMIC DNA]</scope>
    <source>
        <strain>JS666 / ATCC BAA-500</strain>
    </source>
</reference>
<gene>
    <name evidence="1" type="primary">rimO</name>
    <name type="ordered locus">Bpro_2701</name>
</gene>
<comment type="function">
    <text evidence="1">Catalyzes the methylthiolation of an aspartic acid residue of ribosomal protein uS12.</text>
</comment>
<comment type="catalytic activity">
    <reaction evidence="1">
        <text>L-aspartate(89)-[ribosomal protein uS12]-hydrogen + (sulfur carrier)-SH + AH2 + 2 S-adenosyl-L-methionine = 3-methylsulfanyl-L-aspartate(89)-[ribosomal protein uS12]-hydrogen + (sulfur carrier)-H + 5'-deoxyadenosine + L-methionine + A + S-adenosyl-L-homocysteine + 2 H(+)</text>
        <dbReference type="Rhea" id="RHEA:37087"/>
        <dbReference type="Rhea" id="RHEA-COMP:10460"/>
        <dbReference type="Rhea" id="RHEA-COMP:10461"/>
        <dbReference type="Rhea" id="RHEA-COMP:14737"/>
        <dbReference type="Rhea" id="RHEA-COMP:14739"/>
        <dbReference type="ChEBI" id="CHEBI:13193"/>
        <dbReference type="ChEBI" id="CHEBI:15378"/>
        <dbReference type="ChEBI" id="CHEBI:17319"/>
        <dbReference type="ChEBI" id="CHEBI:17499"/>
        <dbReference type="ChEBI" id="CHEBI:29917"/>
        <dbReference type="ChEBI" id="CHEBI:29961"/>
        <dbReference type="ChEBI" id="CHEBI:57844"/>
        <dbReference type="ChEBI" id="CHEBI:57856"/>
        <dbReference type="ChEBI" id="CHEBI:59789"/>
        <dbReference type="ChEBI" id="CHEBI:64428"/>
        <dbReference type="ChEBI" id="CHEBI:73599"/>
        <dbReference type="EC" id="2.8.4.4"/>
    </reaction>
</comment>
<comment type="cofactor">
    <cofactor evidence="1">
        <name>[4Fe-4S] cluster</name>
        <dbReference type="ChEBI" id="CHEBI:49883"/>
    </cofactor>
    <text evidence="1">Binds 2 [4Fe-4S] clusters. One cluster is coordinated with 3 cysteines and an exchangeable S-adenosyl-L-methionine.</text>
</comment>
<comment type="subcellular location">
    <subcellularLocation>
        <location evidence="1">Cytoplasm</location>
    </subcellularLocation>
</comment>
<comment type="similarity">
    <text evidence="1">Belongs to the methylthiotransferase family. RimO subfamily.</text>
</comment>
<protein>
    <recommendedName>
        <fullName evidence="1">Ribosomal protein uS12 methylthiotransferase RimO</fullName>
        <shortName evidence="1">uS12 MTTase</shortName>
        <shortName evidence="1">uS12 methylthiotransferase</shortName>
        <ecNumber evidence="1">2.8.4.4</ecNumber>
    </recommendedName>
    <alternativeName>
        <fullName evidence="1">Ribosomal protein uS12 (aspartate-C(3))-methylthiotransferase</fullName>
    </alternativeName>
    <alternativeName>
        <fullName evidence="1">Ribosome maturation factor RimO</fullName>
    </alternativeName>
</protein>